<feature type="chain" id="PRO_0000233152" description="Putative ATP-dependent RNA helicase DHX57">
    <location>
        <begin position="1"/>
        <end position="1388"/>
    </location>
</feature>
<feature type="domain" description="UBA" evidence="2">
    <location>
        <begin position="175"/>
        <end position="220"/>
    </location>
</feature>
<feature type="domain" description="Helicase ATP-binding" evidence="3">
    <location>
        <begin position="555"/>
        <end position="722"/>
    </location>
</feature>
<feature type="domain" description="Helicase C-terminal" evidence="4">
    <location>
        <begin position="832"/>
        <end position="1012"/>
    </location>
</feature>
<feature type="zinc finger region" description="C3H1-type" evidence="5">
    <location>
        <begin position="299"/>
        <end position="326"/>
    </location>
</feature>
<feature type="region of interest" description="Disordered" evidence="6">
    <location>
        <begin position="1"/>
        <end position="107"/>
    </location>
</feature>
<feature type="region of interest" description="Disordered" evidence="6">
    <location>
        <begin position="121"/>
        <end position="154"/>
    </location>
</feature>
<feature type="short sequence motif" description="DEVH box">
    <location>
        <begin position="669"/>
        <end position="672"/>
    </location>
</feature>
<feature type="compositionally biased region" description="Basic residues" evidence="6">
    <location>
        <begin position="1"/>
        <end position="11"/>
    </location>
</feature>
<feature type="compositionally biased region" description="Gly residues" evidence="6">
    <location>
        <begin position="34"/>
        <end position="51"/>
    </location>
</feature>
<feature type="compositionally biased region" description="Basic and acidic residues" evidence="6">
    <location>
        <begin position="79"/>
        <end position="89"/>
    </location>
</feature>
<feature type="binding site" evidence="3">
    <location>
        <begin position="568"/>
        <end position="575"/>
    </location>
    <ligand>
        <name>ATP</name>
        <dbReference type="ChEBI" id="CHEBI:30616"/>
    </ligand>
</feature>
<feature type="modified residue" description="Phosphoserine" evidence="1">
    <location>
        <position position="128"/>
    </location>
</feature>
<feature type="modified residue" description="Phosphoserine" evidence="1">
    <location>
        <position position="133"/>
    </location>
</feature>
<feature type="modified residue" description="Phosphoserine" evidence="1">
    <location>
        <position position="475"/>
    </location>
</feature>
<feature type="splice variant" id="VSP_018061" description="In isoform 5." evidence="8">
    <location>
        <begin position="1"/>
        <end position="1160"/>
    </location>
</feature>
<feature type="splice variant" id="VSP_018062" description="In isoform 4." evidence="8">
    <location>
        <begin position="1"/>
        <end position="1000"/>
    </location>
</feature>
<feature type="splice variant" id="VSP_018063" description="In isoform 2." evidence="7">
    <location>
        <begin position="77"/>
        <end position="129"/>
    </location>
</feature>
<feature type="splice variant" id="VSP_018064" description="In isoform 4." evidence="8">
    <original>LEQLCL</original>
    <variation>MILFFF</variation>
    <location>
        <begin position="1001"/>
        <end position="1006"/>
    </location>
</feature>
<feature type="splice variant" id="VSP_018065" description="In isoform 3." evidence="8">
    <original>IKILEMFSTHNLQSVFSR</original>
    <variation>LCPSGPPSACLGPAPPPI</variation>
    <location>
        <begin position="1008"/>
        <end position="1025"/>
    </location>
</feature>
<feature type="splice variant" id="VSP_018066" description="In isoform 3." evidence="8">
    <location>
        <begin position="1026"/>
        <end position="1388"/>
    </location>
</feature>
<feature type="sequence conflict" description="In Ref. 2; AAH66091." evidence="9" ref="2">
    <original>A</original>
    <variation>T</variation>
    <location>
        <position position="488"/>
    </location>
</feature>
<feature type="sequence conflict" description="In Ref. 2; AAH62952." evidence="9" ref="2">
    <original>S</original>
    <variation>P</variation>
    <location>
        <position position="514"/>
    </location>
</feature>
<feature type="sequence conflict" description="In Ref. 2; AAH66091." evidence="9" ref="2">
    <original>A</original>
    <variation>T</variation>
    <location>
        <position position="725"/>
    </location>
</feature>
<feature type="sequence conflict" description="In Ref. 1; BAC29042." evidence="9" ref="1">
    <original>T</original>
    <variation>A</variation>
    <location>
        <position position="1137"/>
    </location>
</feature>
<accession>Q6P5D3</accession>
<accession>Q3TS93</accession>
<accession>Q6NZK4</accession>
<accession>Q6P1B4</accession>
<accession>Q8BI63</accession>
<accession>Q8BIA2</accession>
<accession>Q8R360</accession>
<evidence type="ECO:0000250" key="1">
    <source>
        <dbReference type="UniProtKB" id="Q6P158"/>
    </source>
</evidence>
<evidence type="ECO:0000255" key="2">
    <source>
        <dbReference type="PROSITE-ProRule" id="PRU00212"/>
    </source>
</evidence>
<evidence type="ECO:0000255" key="3">
    <source>
        <dbReference type="PROSITE-ProRule" id="PRU00541"/>
    </source>
</evidence>
<evidence type="ECO:0000255" key="4">
    <source>
        <dbReference type="PROSITE-ProRule" id="PRU00542"/>
    </source>
</evidence>
<evidence type="ECO:0000255" key="5">
    <source>
        <dbReference type="PROSITE-ProRule" id="PRU00723"/>
    </source>
</evidence>
<evidence type="ECO:0000256" key="6">
    <source>
        <dbReference type="SAM" id="MobiDB-lite"/>
    </source>
</evidence>
<evidence type="ECO:0000303" key="7">
    <source>
    </source>
</evidence>
<evidence type="ECO:0000303" key="8">
    <source>
    </source>
</evidence>
<evidence type="ECO:0000305" key="9"/>
<gene>
    <name type="primary">Dhx57</name>
</gene>
<reference key="1">
    <citation type="journal article" date="2005" name="Science">
        <title>The transcriptional landscape of the mammalian genome.</title>
        <authorList>
            <person name="Carninci P."/>
            <person name="Kasukawa T."/>
            <person name="Katayama S."/>
            <person name="Gough J."/>
            <person name="Frith M.C."/>
            <person name="Maeda N."/>
            <person name="Oyama R."/>
            <person name="Ravasi T."/>
            <person name="Lenhard B."/>
            <person name="Wells C."/>
            <person name="Kodzius R."/>
            <person name="Shimokawa K."/>
            <person name="Bajic V.B."/>
            <person name="Brenner S.E."/>
            <person name="Batalov S."/>
            <person name="Forrest A.R."/>
            <person name="Zavolan M."/>
            <person name="Davis M.J."/>
            <person name="Wilming L.G."/>
            <person name="Aidinis V."/>
            <person name="Allen J.E."/>
            <person name="Ambesi-Impiombato A."/>
            <person name="Apweiler R."/>
            <person name="Aturaliya R.N."/>
            <person name="Bailey T.L."/>
            <person name="Bansal M."/>
            <person name="Baxter L."/>
            <person name="Beisel K.W."/>
            <person name="Bersano T."/>
            <person name="Bono H."/>
            <person name="Chalk A.M."/>
            <person name="Chiu K.P."/>
            <person name="Choudhary V."/>
            <person name="Christoffels A."/>
            <person name="Clutterbuck D.R."/>
            <person name="Crowe M.L."/>
            <person name="Dalla E."/>
            <person name="Dalrymple B.P."/>
            <person name="de Bono B."/>
            <person name="Della Gatta G."/>
            <person name="di Bernardo D."/>
            <person name="Down T."/>
            <person name="Engstrom P."/>
            <person name="Fagiolini M."/>
            <person name="Faulkner G."/>
            <person name="Fletcher C.F."/>
            <person name="Fukushima T."/>
            <person name="Furuno M."/>
            <person name="Futaki S."/>
            <person name="Gariboldi M."/>
            <person name="Georgii-Hemming P."/>
            <person name="Gingeras T.R."/>
            <person name="Gojobori T."/>
            <person name="Green R.E."/>
            <person name="Gustincich S."/>
            <person name="Harbers M."/>
            <person name="Hayashi Y."/>
            <person name="Hensch T.K."/>
            <person name="Hirokawa N."/>
            <person name="Hill D."/>
            <person name="Huminiecki L."/>
            <person name="Iacono M."/>
            <person name="Ikeo K."/>
            <person name="Iwama A."/>
            <person name="Ishikawa T."/>
            <person name="Jakt M."/>
            <person name="Kanapin A."/>
            <person name="Katoh M."/>
            <person name="Kawasawa Y."/>
            <person name="Kelso J."/>
            <person name="Kitamura H."/>
            <person name="Kitano H."/>
            <person name="Kollias G."/>
            <person name="Krishnan S.P."/>
            <person name="Kruger A."/>
            <person name="Kummerfeld S.K."/>
            <person name="Kurochkin I.V."/>
            <person name="Lareau L.F."/>
            <person name="Lazarevic D."/>
            <person name="Lipovich L."/>
            <person name="Liu J."/>
            <person name="Liuni S."/>
            <person name="McWilliam S."/>
            <person name="Madan Babu M."/>
            <person name="Madera M."/>
            <person name="Marchionni L."/>
            <person name="Matsuda H."/>
            <person name="Matsuzawa S."/>
            <person name="Miki H."/>
            <person name="Mignone F."/>
            <person name="Miyake S."/>
            <person name="Morris K."/>
            <person name="Mottagui-Tabar S."/>
            <person name="Mulder N."/>
            <person name="Nakano N."/>
            <person name="Nakauchi H."/>
            <person name="Ng P."/>
            <person name="Nilsson R."/>
            <person name="Nishiguchi S."/>
            <person name="Nishikawa S."/>
            <person name="Nori F."/>
            <person name="Ohara O."/>
            <person name="Okazaki Y."/>
            <person name="Orlando V."/>
            <person name="Pang K.C."/>
            <person name="Pavan W.J."/>
            <person name="Pavesi G."/>
            <person name="Pesole G."/>
            <person name="Petrovsky N."/>
            <person name="Piazza S."/>
            <person name="Reed J."/>
            <person name="Reid J.F."/>
            <person name="Ring B.Z."/>
            <person name="Ringwald M."/>
            <person name="Rost B."/>
            <person name="Ruan Y."/>
            <person name="Salzberg S.L."/>
            <person name="Sandelin A."/>
            <person name="Schneider C."/>
            <person name="Schoenbach C."/>
            <person name="Sekiguchi K."/>
            <person name="Semple C.A."/>
            <person name="Seno S."/>
            <person name="Sessa L."/>
            <person name="Sheng Y."/>
            <person name="Shibata Y."/>
            <person name="Shimada H."/>
            <person name="Shimada K."/>
            <person name="Silva D."/>
            <person name="Sinclair B."/>
            <person name="Sperling S."/>
            <person name="Stupka E."/>
            <person name="Sugiura K."/>
            <person name="Sultana R."/>
            <person name="Takenaka Y."/>
            <person name="Taki K."/>
            <person name="Tammoja K."/>
            <person name="Tan S.L."/>
            <person name="Tang S."/>
            <person name="Taylor M.S."/>
            <person name="Tegner J."/>
            <person name="Teichmann S.A."/>
            <person name="Ueda H.R."/>
            <person name="van Nimwegen E."/>
            <person name="Verardo R."/>
            <person name="Wei C.L."/>
            <person name="Yagi K."/>
            <person name="Yamanishi H."/>
            <person name="Zabarovsky E."/>
            <person name="Zhu S."/>
            <person name="Zimmer A."/>
            <person name="Hide W."/>
            <person name="Bult C."/>
            <person name="Grimmond S.M."/>
            <person name="Teasdale R.D."/>
            <person name="Liu E.T."/>
            <person name="Brusic V."/>
            <person name="Quackenbush J."/>
            <person name="Wahlestedt C."/>
            <person name="Mattick J.S."/>
            <person name="Hume D.A."/>
            <person name="Kai C."/>
            <person name="Sasaki D."/>
            <person name="Tomaru Y."/>
            <person name="Fukuda S."/>
            <person name="Kanamori-Katayama M."/>
            <person name="Suzuki M."/>
            <person name="Aoki J."/>
            <person name="Arakawa T."/>
            <person name="Iida J."/>
            <person name="Imamura K."/>
            <person name="Itoh M."/>
            <person name="Kato T."/>
            <person name="Kawaji H."/>
            <person name="Kawagashira N."/>
            <person name="Kawashima T."/>
            <person name="Kojima M."/>
            <person name="Kondo S."/>
            <person name="Konno H."/>
            <person name="Nakano K."/>
            <person name="Ninomiya N."/>
            <person name="Nishio T."/>
            <person name="Okada M."/>
            <person name="Plessy C."/>
            <person name="Shibata K."/>
            <person name="Shiraki T."/>
            <person name="Suzuki S."/>
            <person name="Tagami M."/>
            <person name="Waki K."/>
            <person name="Watahiki A."/>
            <person name="Okamura-Oho Y."/>
            <person name="Suzuki H."/>
            <person name="Kawai J."/>
            <person name="Hayashizaki Y."/>
        </authorList>
    </citation>
    <scope>NUCLEOTIDE SEQUENCE [LARGE SCALE MRNA] (ISOFORMS 3; 4 AND 5)</scope>
    <source>
        <strain>C57BL/6J</strain>
        <tissue>Eye</tissue>
        <tissue>Urinary bladder</tissue>
    </source>
</reference>
<reference key="2">
    <citation type="journal article" date="2004" name="Genome Res.">
        <title>The status, quality, and expansion of the NIH full-length cDNA project: the Mammalian Gene Collection (MGC).</title>
        <authorList>
            <consortium name="The MGC Project Team"/>
        </authorList>
    </citation>
    <scope>NUCLEOTIDE SEQUENCE [LARGE SCALE MRNA] (ISOFORMS 1 AND 2)</scope>
    <source>
        <strain>C57BL/6J</strain>
        <tissue>Brain</tissue>
        <tissue>Mammary tumor</tissue>
    </source>
</reference>
<reference key="3">
    <citation type="journal article" date="2010" name="Cell">
        <title>A tissue-specific atlas of mouse protein phosphorylation and expression.</title>
        <authorList>
            <person name="Huttlin E.L."/>
            <person name="Jedrychowski M.P."/>
            <person name="Elias J.E."/>
            <person name="Goswami T."/>
            <person name="Rad R."/>
            <person name="Beausoleil S.A."/>
            <person name="Villen J."/>
            <person name="Haas W."/>
            <person name="Sowa M.E."/>
            <person name="Gygi S.P."/>
        </authorList>
    </citation>
    <scope>IDENTIFICATION BY MASS SPECTROMETRY [LARGE SCALE ANALYSIS]</scope>
    <source>
        <tissue>Brain</tissue>
        <tissue>Spleen</tissue>
    </source>
</reference>
<protein>
    <recommendedName>
        <fullName>Putative ATP-dependent RNA helicase DHX57</fullName>
        <ecNumber>3.6.4.13</ecNumber>
    </recommendedName>
    <alternativeName>
        <fullName>DEAH box protein 57</fullName>
    </alternativeName>
</protein>
<dbReference type="EC" id="3.6.4.13"/>
<dbReference type="EMBL" id="AK035344">
    <property type="protein sequence ID" value="BAC29042.1"/>
    <property type="molecule type" value="mRNA"/>
</dbReference>
<dbReference type="EMBL" id="AK053628">
    <property type="protein sequence ID" value="BAC35451.1"/>
    <property type="molecule type" value="mRNA"/>
</dbReference>
<dbReference type="EMBL" id="AK162192">
    <property type="protein sequence ID" value="BAE36782.1"/>
    <property type="molecule type" value="mRNA"/>
</dbReference>
<dbReference type="EMBL" id="BC026474">
    <property type="protein sequence ID" value="AAH26474.1"/>
    <property type="molecule type" value="mRNA"/>
</dbReference>
<dbReference type="EMBL" id="BC062952">
    <property type="protein sequence ID" value="AAH62952.1"/>
    <property type="molecule type" value="mRNA"/>
</dbReference>
<dbReference type="EMBL" id="BC065169">
    <property type="protein sequence ID" value="AAH65169.1"/>
    <property type="molecule type" value="mRNA"/>
</dbReference>
<dbReference type="EMBL" id="BC066091">
    <property type="protein sequence ID" value="AAH66091.1"/>
    <property type="molecule type" value="mRNA"/>
</dbReference>
<dbReference type="CCDS" id="CCDS28990.1">
    <molecule id="Q6P5D3-2"/>
</dbReference>
<dbReference type="CCDS" id="CCDS50188.1">
    <molecule id="Q6P5D3-1"/>
</dbReference>
<dbReference type="RefSeq" id="NP_001157231.1">
    <molecule id="Q6P5D3-1"/>
    <property type="nucleotide sequence ID" value="NM_001163759.2"/>
</dbReference>
<dbReference type="RefSeq" id="NP_001397255.1">
    <molecule id="Q6P5D3-1"/>
    <property type="nucleotide sequence ID" value="NM_001410326.1"/>
</dbReference>
<dbReference type="RefSeq" id="NP_001397256.1">
    <molecule id="Q6P5D3-2"/>
    <property type="nucleotide sequence ID" value="NM_001410327.1"/>
</dbReference>
<dbReference type="RefSeq" id="NP_945180.2">
    <molecule id="Q6P5D3-2"/>
    <property type="nucleotide sequence ID" value="NM_198942.3"/>
</dbReference>
<dbReference type="RefSeq" id="XP_006523510.1">
    <property type="nucleotide sequence ID" value="XM_006523447.1"/>
</dbReference>
<dbReference type="RefSeq" id="XP_006523511.1">
    <property type="nucleotide sequence ID" value="XM_006523448.1"/>
</dbReference>
<dbReference type="RefSeq" id="XP_017172691.1">
    <property type="nucleotide sequence ID" value="XM_017317202.1"/>
</dbReference>
<dbReference type="RefSeq" id="XP_036016147.1">
    <molecule id="Q6P5D3-3"/>
    <property type="nucleotide sequence ID" value="XM_036160254.1"/>
</dbReference>
<dbReference type="SMR" id="Q6P5D3"/>
<dbReference type="BioGRID" id="223127">
    <property type="interactions" value="7"/>
</dbReference>
<dbReference type="FunCoup" id="Q6P5D3">
    <property type="interactions" value="2305"/>
</dbReference>
<dbReference type="IntAct" id="Q6P5D3">
    <property type="interactions" value="1"/>
</dbReference>
<dbReference type="MINT" id="Q6P5D3"/>
<dbReference type="STRING" id="10090.ENSMUSP00000083742"/>
<dbReference type="GlyGen" id="Q6P5D3">
    <property type="glycosylation" value="2 sites, 2 N-linked glycans (2 sites)"/>
</dbReference>
<dbReference type="iPTMnet" id="Q6P5D3"/>
<dbReference type="PhosphoSitePlus" id="Q6P5D3"/>
<dbReference type="jPOST" id="Q6P5D3"/>
<dbReference type="PaxDb" id="10090-ENSMUSP00000083742"/>
<dbReference type="PeptideAtlas" id="Q6P5D3"/>
<dbReference type="ProteomicsDB" id="279767">
    <molecule id="Q6P5D3-1"/>
</dbReference>
<dbReference type="ProteomicsDB" id="279768">
    <molecule id="Q6P5D3-2"/>
</dbReference>
<dbReference type="ProteomicsDB" id="279769">
    <molecule id="Q6P5D3-3"/>
</dbReference>
<dbReference type="ProteomicsDB" id="279770">
    <molecule id="Q6P5D3-4"/>
</dbReference>
<dbReference type="ProteomicsDB" id="279771">
    <molecule id="Q6P5D3-5"/>
</dbReference>
<dbReference type="Pumba" id="Q6P5D3"/>
<dbReference type="Antibodypedia" id="29537">
    <property type="antibodies" value="62 antibodies from 17 providers"/>
</dbReference>
<dbReference type="DNASU" id="106794"/>
<dbReference type="Ensembl" id="ENSMUST00000038166.9">
    <molecule id="Q6P5D3-2"/>
    <property type="protein sequence ID" value="ENSMUSP00000041069.8"/>
    <property type="gene ID" value="ENSMUSG00000035051.16"/>
</dbReference>
<dbReference type="Ensembl" id="ENSMUST00000086555.11">
    <molecule id="Q6P5D3-1"/>
    <property type="protein sequence ID" value="ENSMUSP00000083742.4"/>
    <property type="gene ID" value="ENSMUSG00000035051.16"/>
</dbReference>
<dbReference type="GeneID" id="106794"/>
<dbReference type="KEGG" id="mmu:106794"/>
<dbReference type="UCSC" id="uc008dqx.2">
    <molecule id="Q6P5D3-5"/>
    <property type="organism name" value="mouse"/>
</dbReference>
<dbReference type="UCSC" id="uc008dqy.2">
    <molecule id="Q6P5D3-4"/>
    <property type="organism name" value="mouse"/>
</dbReference>
<dbReference type="UCSC" id="uc008dqz.2">
    <molecule id="Q6P5D3-2"/>
    <property type="organism name" value="mouse"/>
</dbReference>
<dbReference type="UCSC" id="uc008dra.2">
    <molecule id="Q6P5D3-1"/>
    <property type="organism name" value="mouse"/>
</dbReference>
<dbReference type="UCSC" id="uc008drb.1">
    <molecule id="Q6P5D3-3"/>
    <property type="organism name" value="mouse"/>
</dbReference>
<dbReference type="AGR" id="MGI:2147067"/>
<dbReference type="CTD" id="90957"/>
<dbReference type="MGI" id="MGI:2147067">
    <property type="gene designation" value="Dhx57"/>
</dbReference>
<dbReference type="VEuPathDB" id="HostDB:ENSMUSG00000035051"/>
<dbReference type="eggNOG" id="KOG0920">
    <property type="taxonomic scope" value="Eukaryota"/>
</dbReference>
<dbReference type="GeneTree" id="ENSGT00940000156883"/>
<dbReference type="HOGENOM" id="CLU_001832_4_1_1"/>
<dbReference type="InParanoid" id="Q6P5D3"/>
<dbReference type="OMA" id="PERVYVQ"/>
<dbReference type="OrthoDB" id="5600252at2759"/>
<dbReference type="PhylomeDB" id="Q6P5D3"/>
<dbReference type="TreeFam" id="TF324744"/>
<dbReference type="BioGRID-ORCS" id="106794">
    <property type="hits" value="3 hits in 78 CRISPR screens"/>
</dbReference>
<dbReference type="CD-CODE" id="CE726F99">
    <property type="entry name" value="Postsynaptic density"/>
</dbReference>
<dbReference type="ChiTaRS" id="Dhx57">
    <property type="organism name" value="mouse"/>
</dbReference>
<dbReference type="PRO" id="PR:Q6P5D3"/>
<dbReference type="Proteomes" id="UP000000589">
    <property type="component" value="Chromosome 17"/>
</dbReference>
<dbReference type="RNAct" id="Q6P5D3">
    <property type="molecule type" value="protein"/>
</dbReference>
<dbReference type="Bgee" id="ENSMUSG00000035051">
    <property type="expression patterns" value="Expressed in saccule of membranous labyrinth and 245 other cell types or tissues"/>
</dbReference>
<dbReference type="GO" id="GO:0005524">
    <property type="term" value="F:ATP binding"/>
    <property type="evidence" value="ECO:0007669"/>
    <property type="project" value="UniProtKB-KW"/>
</dbReference>
<dbReference type="GO" id="GO:0016887">
    <property type="term" value="F:ATP hydrolysis activity"/>
    <property type="evidence" value="ECO:0007669"/>
    <property type="project" value="RHEA"/>
</dbReference>
<dbReference type="GO" id="GO:0003676">
    <property type="term" value="F:nucleic acid binding"/>
    <property type="evidence" value="ECO:0007669"/>
    <property type="project" value="InterPro"/>
</dbReference>
<dbReference type="GO" id="GO:0003724">
    <property type="term" value="F:RNA helicase activity"/>
    <property type="evidence" value="ECO:0007669"/>
    <property type="project" value="UniProtKB-EC"/>
</dbReference>
<dbReference type="GO" id="GO:0008270">
    <property type="term" value="F:zinc ion binding"/>
    <property type="evidence" value="ECO:0007669"/>
    <property type="project" value="UniProtKB-KW"/>
</dbReference>
<dbReference type="CDD" id="cd17985">
    <property type="entry name" value="DEXHc_DHX57"/>
    <property type="match status" value="1"/>
</dbReference>
<dbReference type="CDD" id="cd23825">
    <property type="entry name" value="RWD_DHX57"/>
    <property type="match status" value="1"/>
</dbReference>
<dbReference type="CDD" id="cd18791">
    <property type="entry name" value="SF2_C_RHA"/>
    <property type="match status" value="1"/>
</dbReference>
<dbReference type="CDD" id="cd14317">
    <property type="entry name" value="UBA_DHX57"/>
    <property type="match status" value="1"/>
</dbReference>
<dbReference type="FunFam" id="3.40.50.300:FF:000325">
    <property type="entry name" value="ATP-dependent RNA helicase DHX29"/>
    <property type="match status" value="1"/>
</dbReference>
<dbReference type="FunFam" id="3.40.50.300:FF:000284">
    <property type="entry name" value="probable ATP-dependent RNA helicase YTHDC2"/>
    <property type="match status" value="1"/>
</dbReference>
<dbReference type="FunFam" id="1.20.120.1080:FF:000002">
    <property type="entry name" value="Putative ATP-dependent RNA helicase DHX36"/>
    <property type="match status" value="1"/>
</dbReference>
<dbReference type="Gene3D" id="1.20.120.1080">
    <property type="match status" value="1"/>
</dbReference>
<dbReference type="Gene3D" id="1.10.8.10">
    <property type="entry name" value="DNA helicase RuvA subunit, C-terminal domain"/>
    <property type="match status" value="1"/>
</dbReference>
<dbReference type="Gene3D" id="3.40.50.300">
    <property type="entry name" value="P-loop containing nucleotide triphosphate hydrolases"/>
    <property type="match status" value="2"/>
</dbReference>
<dbReference type="Gene3D" id="4.10.1000.10">
    <property type="entry name" value="Zinc finger, CCCH-type"/>
    <property type="match status" value="1"/>
</dbReference>
<dbReference type="InterPro" id="IPR011709">
    <property type="entry name" value="DEAD-box_helicase_OB_fold"/>
</dbReference>
<dbReference type="InterPro" id="IPR011545">
    <property type="entry name" value="DEAD/DEAH_box_helicase_dom"/>
</dbReference>
<dbReference type="InterPro" id="IPR042615">
    <property type="entry name" value="DHX57_UBA"/>
</dbReference>
<dbReference type="InterPro" id="IPR048333">
    <property type="entry name" value="HA2_WH"/>
</dbReference>
<dbReference type="InterPro" id="IPR007502">
    <property type="entry name" value="Helicase-assoc_dom"/>
</dbReference>
<dbReference type="InterPro" id="IPR014001">
    <property type="entry name" value="Helicase_ATP-bd"/>
</dbReference>
<dbReference type="InterPro" id="IPR001650">
    <property type="entry name" value="Helicase_C-like"/>
</dbReference>
<dbReference type="InterPro" id="IPR027417">
    <property type="entry name" value="P-loop_NTPase"/>
</dbReference>
<dbReference type="InterPro" id="IPR006575">
    <property type="entry name" value="RWD_dom"/>
</dbReference>
<dbReference type="InterPro" id="IPR015940">
    <property type="entry name" value="UBA"/>
</dbReference>
<dbReference type="InterPro" id="IPR009060">
    <property type="entry name" value="UBA-like_sf"/>
</dbReference>
<dbReference type="InterPro" id="IPR000571">
    <property type="entry name" value="Znf_CCCH"/>
</dbReference>
<dbReference type="InterPro" id="IPR036855">
    <property type="entry name" value="Znf_CCCH_sf"/>
</dbReference>
<dbReference type="PANTHER" id="PTHR18934">
    <property type="entry name" value="ATP-DEPENDENT RNA HELICASE"/>
    <property type="match status" value="1"/>
</dbReference>
<dbReference type="PANTHER" id="PTHR18934:SF145">
    <property type="entry name" value="ATP-DEPENDENT RNA HELICASE DHX57-RELATED"/>
    <property type="match status" value="1"/>
</dbReference>
<dbReference type="Pfam" id="PF00270">
    <property type="entry name" value="DEAD"/>
    <property type="match status" value="1"/>
</dbReference>
<dbReference type="Pfam" id="PF21010">
    <property type="entry name" value="HA2_C"/>
    <property type="match status" value="1"/>
</dbReference>
<dbReference type="Pfam" id="PF04408">
    <property type="entry name" value="HA2_N"/>
    <property type="match status" value="1"/>
</dbReference>
<dbReference type="Pfam" id="PF00271">
    <property type="entry name" value="Helicase_C"/>
    <property type="match status" value="1"/>
</dbReference>
<dbReference type="Pfam" id="PF07717">
    <property type="entry name" value="OB_NTP_bind"/>
    <property type="match status" value="1"/>
</dbReference>
<dbReference type="Pfam" id="PF05773">
    <property type="entry name" value="RWD"/>
    <property type="match status" value="1"/>
</dbReference>
<dbReference type="Pfam" id="PF00642">
    <property type="entry name" value="zf-CCCH"/>
    <property type="match status" value="1"/>
</dbReference>
<dbReference type="SMART" id="SM00487">
    <property type="entry name" value="DEXDc"/>
    <property type="match status" value="1"/>
</dbReference>
<dbReference type="SMART" id="SM00847">
    <property type="entry name" value="HA2"/>
    <property type="match status" value="1"/>
</dbReference>
<dbReference type="SMART" id="SM00490">
    <property type="entry name" value="HELICc"/>
    <property type="match status" value="1"/>
</dbReference>
<dbReference type="SMART" id="SM00165">
    <property type="entry name" value="UBA"/>
    <property type="match status" value="1"/>
</dbReference>
<dbReference type="SMART" id="SM00356">
    <property type="entry name" value="ZnF_C3H1"/>
    <property type="match status" value="1"/>
</dbReference>
<dbReference type="SUPFAM" id="SSF90229">
    <property type="entry name" value="CCCH zinc finger"/>
    <property type="match status" value="1"/>
</dbReference>
<dbReference type="SUPFAM" id="SSF52540">
    <property type="entry name" value="P-loop containing nucleoside triphosphate hydrolases"/>
    <property type="match status" value="1"/>
</dbReference>
<dbReference type="SUPFAM" id="SSF46934">
    <property type="entry name" value="UBA-like"/>
    <property type="match status" value="1"/>
</dbReference>
<dbReference type="PROSITE" id="PS51192">
    <property type="entry name" value="HELICASE_ATP_BIND_1"/>
    <property type="match status" value="1"/>
</dbReference>
<dbReference type="PROSITE" id="PS51194">
    <property type="entry name" value="HELICASE_CTER"/>
    <property type="match status" value="1"/>
</dbReference>
<dbReference type="PROSITE" id="PS50030">
    <property type="entry name" value="UBA"/>
    <property type="match status" value="1"/>
</dbReference>
<dbReference type="PROSITE" id="PS50103">
    <property type="entry name" value="ZF_C3H1"/>
    <property type="match status" value="1"/>
</dbReference>
<sequence>MSSSVRRKGKPGKGDGKGSSRGGRGGKGHMNKSHGGGGGGGGSCGGGGGGSRKASNRIWDDGDDFCVFTEPKRPSRPCDSNKSKGETRPKWKPKAKVPLQTLHMTSENQEKVKALLRDLQEQGADAGSERGTSGEEEDSEPQCGEEQGWPAGQEPIFLPDCSPWEYIGPEEVEPPVPECAVSPLAVQKLSRYGFHTEHCQLALRICDGDLGAALEHLLRQCFSETFGERMALSEAAVYVSLNECVEQRQEETLALKSICGEKFIERIQNRVWTIGLELDYLTNKFCKSKQKESSKNVRDTSPETCKFYLKGNCKFGSKCKFKHEVPPHQMIGRAERNVNDPHLDADDDTTFMYELQIRFSKDHKYPYQAPLVAFYSTNENLPLACRLHISEFLYGKALEFAKTSEPVVYSLITLLEEESEIVKLLTHTQHKYSVPPVNVPPVPSETRISKPAYRKPVVPSNTFLSNQMLEGERLSELEEDADEDEGPASIIVENESYVNLKKRSYKRYDRPAKSLFAENSKICRQFQMKQASRQFHAILQERQLLPAWEERETILKLLSKHQVVVISGMTGCGKTTQIPQFILDNSLNGPPERVANIICTQPRRISAISVAERVAKERAERVGLTVGYQIRLESVKSSATRLLYCTTGVLLRRLEGDATLQGVTHIIVDEVHERTEESDFLLLVLKDIVMQRATLQVILMSATLDAGLFSKYFSYCPVITIPGRAFPVDQFFLEDALAVTRYVLQDGSPYMRSMKQIAKEKLKARHNRTAQEEVEEDLRLSLHLQDEEESVKDTIPDQQLDFKQLLIRYKGVSKSVIKTMSVMDFEKVNLELIEALLEWIVDGKHAYPPGAVLVFLPGLAEIKMLYEQLQSNSLFNNRRSHRCVIHPLHSSLSSEEQQAVFVKPPMGVTKIIISTNIAETSITIDDVVYVIDSGKMKEKRYDAGKGMESLEDTFVSQANALQRKGRAGRVASGVCFHLFTSHHYNHQLLKQQLPEIQRVPLEQLCLRIKILEMFSTHNLQSVFSRLIEPPHIDSLRASKVRLRDLGALTPDEKLTPLGYHLASLPVDVRIGKLMLLGSIFRCLDPALTIAASLAFKSPFVSPWDKKEEANQKKLEFAFANSDYLALLCAYKGWQLSTKESARASYNYCRQNFLSGRTLQEMASLKRQFTELLSDIGFVKEGLRAKEIEKRAQGGDGVLDATGEEANTNAENPKLISAVLCAALYPNVVQVKTPEGKFQKTSSGVVRLQPKSAELKFVTKNDGYVHIHPSSVNYQVRHFDSPYLLYHEKIKTSRVFIRDCSMVSVYPLVLFGGGQVNVQLQRGAFVVSLDDGWIRFVAASHQVAELVKELRCELDQLLQDKIKNPSMDLCSCPRGSRIISMIVKLITTQ</sequence>
<proteinExistence type="evidence at protein level"/>
<name>DHX57_MOUSE</name>
<organism>
    <name type="scientific">Mus musculus</name>
    <name type="common">Mouse</name>
    <dbReference type="NCBI Taxonomy" id="10090"/>
    <lineage>
        <taxon>Eukaryota</taxon>
        <taxon>Metazoa</taxon>
        <taxon>Chordata</taxon>
        <taxon>Craniata</taxon>
        <taxon>Vertebrata</taxon>
        <taxon>Euteleostomi</taxon>
        <taxon>Mammalia</taxon>
        <taxon>Eutheria</taxon>
        <taxon>Euarchontoglires</taxon>
        <taxon>Glires</taxon>
        <taxon>Rodentia</taxon>
        <taxon>Myomorpha</taxon>
        <taxon>Muroidea</taxon>
        <taxon>Muridae</taxon>
        <taxon>Murinae</taxon>
        <taxon>Mus</taxon>
        <taxon>Mus</taxon>
    </lineage>
</organism>
<comment type="function">
    <text>Probable ATP-binding RNA helicase.</text>
</comment>
<comment type="catalytic activity">
    <reaction>
        <text>ATP + H2O = ADP + phosphate + H(+)</text>
        <dbReference type="Rhea" id="RHEA:13065"/>
        <dbReference type="ChEBI" id="CHEBI:15377"/>
        <dbReference type="ChEBI" id="CHEBI:15378"/>
        <dbReference type="ChEBI" id="CHEBI:30616"/>
        <dbReference type="ChEBI" id="CHEBI:43474"/>
        <dbReference type="ChEBI" id="CHEBI:456216"/>
        <dbReference type="EC" id="3.6.4.13"/>
    </reaction>
</comment>
<comment type="alternative products">
    <event type="alternative splicing"/>
    <isoform>
        <id>Q6P5D3-1</id>
        <name>1</name>
        <sequence type="displayed"/>
    </isoform>
    <isoform>
        <id>Q6P5D3-2</id>
        <name>2</name>
        <sequence type="described" ref="VSP_018063"/>
    </isoform>
    <isoform>
        <id>Q6P5D3-3</id>
        <name>3</name>
        <sequence type="described" ref="VSP_018065 VSP_018066"/>
    </isoform>
    <isoform>
        <id>Q6P5D3-4</id>
        <name>4</name>
        <sequence type="described" ref="VSP_018062 VSP_018064"/>
    </isoform>
    <isoform>
        <id>Q6P5D3-5</id>
        <name>5</name>
        <sequence type="described" ref="VSP_018061"/>
    </isoform>
</comment>
<comment type="similarity">
    <text evidence="9">Belongs to the DEAD box helicase family. DEAH subfamily.</text>
</comment>
<keyword id="KW-0025">Alternative splicing</keyword>
<keyword id="KW-0067">ATP-binding</keyword>
<keyword id="KW-0175">Coiled coil</keyword>
<keyword id="KW-0347">Helicase</keyword>
<keyword id="KW-0378">Hydrolase</keyword>
<keyword id="KW-0479">Metal-binding</keyword>
<keyword id="KW-0547">Nucleotide-binding</keyword>
<keyword id="KW-0597">Phosphoprotein</keyword>
<keyword id="KW-1185">Reference proteome</keyword>
<keyword id="KW-0862">Zinc</keyword>
<keyword id="KW-0863">Zinc-finger</keyword>